<comment type="function">
    <text evidence="3">mediates virus attachment to host receptor and fusion of viral and host membrane.</text>
</comment>
<comment type="subcellular location">
    <molecule>Glycoprotein</molecule>
    <subcellularLocation>
        <location evidence="3">Virion membrane</location>
    </subcellularLocation>
    <subcellularLocation>
        <location evidence="3">Host cell membrane</location>
    </subcellularLocation>
</comment>
<comment type="similarity">
    <text evidence="3">Belongs to the reptarenavirus GPC protein family.</text>
</comment>
<accession>J7HBH4</accession>
<proteinExistence type="inferred from homology"/>
<gene>
    <name type="primary">GPC</name>
    <name type="synonym">GP-C</name>
    <name type="ordered locus">Segment S</name>
</gene>
<sequence length="427" mass="47176">MMSHIRLVLCSALLSMMSCPTSGTIGEMLSLAASSNSSICHGMQFTEPTESFMGILPNETLPMFIFSIMHSEAVPKVGKTLRISHDMKLFGGEAVNYMIFVNKILYEPISYYNYTGSCRQQGLSSCVRVYSDLVNGSKGNPSVKLGFTAIELNKTKNTDFHNLGFKICFSCRDHNGIRLVVYNKNNRTAQLMMCPSELIFSQDFTINSTSVNPSEEAAVPLLNVTGYTCIALHNKNMLTHHSPALSSGSKVDNTLEPGCDSNVGLFGHSTGTDYGWGLANFFSAGITNSLQISQLEHVTDAIACKIAKTSNYTTTALFLLNKEEGEIRDHVIEHEVALNYLLAHQGGLCSVVKGPMCCSDIDDFRRNVSDMIDKVHEEMKKFYHEPDPFGGLGTWGFYGTIFGHVLQWIPIIIMVVVVCFVCSWVRK</sequence>
<name>GLYC_GOGV</name>
<protein>
    <recommendedName>
        <fullName>Glycoprotein</fullName>
    </recommendedName>
</protein>
<keyword id="KW-1170">Fusion of virus membrane with host endosomal membrane</keyword>
<keyword id="KW-1168">Fusion of virus membrane with host membrane</keyword>
<keyword id="KW-0325">Glycoprotein</keyword>
<keyword id="KW-1032">Host cell membrane</keyword>
<keyword id="KW-1043">Host membrane</keyword>
<keyword id="KW-0945">Host-virus interaction</keyword>
<keyword id="KW-0472">Membrane</keyword>
<keyword id="KW-1185">Reference proteome</keyword>
<keyword id="KW-0812">Transmembrane</keyword>
<keyword id="KW-1133">Transmembrane helix</keyword>
<keyword id="KW-1161">Viral attachment to host cell</keyword>
<keyword id="KW-0261">Viral envelope protein</keyword>
<keyword id="KW-1162">Viral penetration into host cytoplasm</keyword>
<keyword id="KW-0946">Virion</keyword>
<keyword id="KW-1160">Virus entry into host cell</keyword>
<feature type="chain" id="PRO_0000443034" description="Glycoprotein">
    <location>
        <begin position="1"/>
        <end position="427"/>
    </location>
</feature>
<feature type="topological domain" description="Extracellular" evidence="1">
    <location>
        <begin position="2"/>
        <end position="50"/>
    </location>
</feature>
<feature type="transmembrane region" description="Helical" evidence="1">
    <location>
        <begin position="51"/>
        <end position="71"/>
    </location>
</feature>
<feature type="topological domain" description="Cytoplasmic" evidence="1">
    <location>
        <begin position="72"/>
        <end position="88"/>
    </location>
</feature>
<feature type="transmembrane region" description="Helical" evidence="1">
    <location>
        <begin position="89"/>
        <end position="109"/>
    </location>
</feature>
<feature type="topological domain" description="Extracellular" evidence="1">
    <location>
        <begin position="110"/>
        <end position="400"/>
    </location>
</feature>
<feature type="transmembrane region" description="Helical" evidence="1">
    <location>
        <begin position="401"/>
        <end position="421"/>
    </location>
</feature>
<feature type="topological domain" description="Cytoplasmic" evidence="1">
    <location>
        <begin position="422"/>
        <end position="427"/>
    </location>
</feature>
<feature type="glycosylation site" description="N-linked (GlcNAc...) asparagine; by host" evidence="2">
    <location>
        <position position="36"/>
    </location>
</feature>
<feature type="glycosylation site" description="N-linked (GlcNAc...) asparagine; by host" evidence="2">
    <location>
        <position position="113"/>
    </location>
</feature>
<feature type="glycosylation site" description="N-linked (GlcNAc...) asparagine; by host" evidence="2">
    <location>
        <position position="135"/>
    </location>
</feature>
<feature type="glycosylation site" description="N-linked (GlcNAc...) asparagine; by host" evidence="2">
    <location>
        <position position="153"/>
    </location>
</feature>
<feature type="glycosylation site" description="N-linked (GlcNAc...) asparagine; by host" evidence="2">
    <location>
        <position position="186"/>
    </location>
</feature>
<feature type="glycosylation site" description="N-linked (GlcNAc...) asparagine; by host" evidence="2">
    <location>
        <position position="207"/>
    </location>
</feature>
<feature type="glycosylation site" description="N-linked (GlcNAc...) asparagine; by host" evidence="2">
    <location>
        <position position="223"/>
    </location>
</feature>
<feature type="glycosylation site" description="N-linked (GlcNAc...) asparagine; by host" evidence="2">
    <location>
        <position position="311"/>
    </location>
</feature>
<feature type="glycosylation site" description="N-linked (GlcNAc...) asparagine; by host" evidence="2">
    <location>
        <position position="367"/>
    </location>
</feature>
<dbReference type="EMBL" id="JQ717264">
    <property type="protein sequence ID" value="AFP93555.1"/>
    <property type="molecule type" value="Genomic_RNA"/>
</dbReference>
<dbReference type="RefSeq" id="YP_006590090.1">
    <property type="nucleotide sequence ID" value="NC_018483.1"/>
</dbReference>
<dbReference type="SMR" id="J7HBH4"/>
<dbReference type="GlyCosmos" id="J7HBH4">
    <property type="glycosylation" value="9 sites, No reported glycans"/>
</dbReference>
<dbReference type="GeneID" id="13466439"/>
<dbReference type="KEGG" id="vg:13466439"/>
<dbReference type="OrthoDB" id="3346at10239"/>
<dbReference type="Proteomes" id="UP000134698">
    <property type="component" value="Genome"/>
</dbReference>
<dbReference type="GO" id="GO:0020002">
    <property type="term" value="C:host cell plasma membrane"/>
    <property type="evidence" value="ECO:0007669"/>
    <property type="project" value="UniProtKB-SubCell"/>
</dbReference>
<dbReference type="GO" id="GO:0016020">
    <property type="term" value="C:membrane"/>
    <property type="evidence" value="ECO:0007669"/>
    <property type="project" value="UniProtKB-KW"/>
</dbReference>
<dbReference type="GO" id="GO:0019031">
    <property type="term" value="C:viral envelope"/>
    <property type="evidence" value="ECO:0007669"/>
    <property type="project" value="UniProtKB-KW"/>
</dbReference>
<dbReference type="GO" id="GO:0055036">
    <property type="term" value="C:virion membrane"/>
    <property type="evidence" value="ECO:0007669"/>
    <property type="project" value="UniProtKB-SubCell"/>
</dbReference>
<dbReference type="GO" id="GO:0039654">
    <property type="term" value="P:fusion of virus membrane with host endosome membrane"/>
    <property type="evidence" value="ECO:0007669"/>
    <property type="project" value="UniProtKB-KW"/>
</dbReference>
<dbReference type="GO" id="GO:0046718">
    <property type="term" value="P:symbiont entry into host cell"/>
    <property type="evidence" value="ECO:0007669"/>
    <property type="project" value="UniProtKB-KW"/>
</dbReference>
<dbReference type="GO" id="GO:0019062">
    <property type="term" value="P:virion attachment to host cell"/>
    <property type="evidence" value="ECO:0007669"/>
    <property type="project" value="UniProtKB-KW"/>
</dbReference>
<dbReference type="Gene3D" id="1.10.287.210">
    <property type="match status" value="1"/>
</dbReference>
<dbReference type="InterPro" id="IPR018154">
    <property type="entry name" value="TLV/ENV_coat_polyprotein"/>
</dbReference>
<dbReference type="PANTHER" id="PTHR10424">
    <property type="entry name" value="VIRAL ENVELOPE PROTEIN"/>
    <property type="match status" value="1"/>
</dbReference>
<dbReference type="SUPFAM" id="SSF58069">
    <property type="entry name" value="Virus ectodomain"/>
    <property type="match status" value="1"/>
</dbReference>
<reference key="1">
    <citation type="journal article" date="2012" name="MBio">
        <title>Identification, characterization, and in vitro culture of highly divergent arenaviruses from bosysa constrictors and annulated tree boas: candidate etiological agents for snake inclusion body disease.</title>
        <authorList>
            <person name="Stenglein M.D."/>
            <person name="Sanders C."/>
            <person name="Kistler A.L."/>
            <person name="Ruby J.G."/>
            <person name="Franco J.Y."/>
            <person name="Reavill D.R."/>
            <person name="Dunker F."/>
            <person name="Derisi J.L."/>
        </authorList>
    </citation>
    <scope>NUCLEOTIDE SEQUENCE [LARGE SCALE GENOMIC DNA]</scope>
</reference>
<organism>
    <name type="scientific">Alethinophid 1 reptarenavirus (isolate AlRrV1/Boa/USA/BC/2009)</name>
    <name type="common">Golden Gate virus</name>
    <dbReference type="NCBI Taxonomy" id="1223562"/>
    <lineage>
        <taxon>Viruses</taxon>
        <taxon>Riboviria</taxon>
        <taxon>Orthornavirae</taxon>
        <taxon>Negarnaviricota</taxon>
        <taxon>Polyploviricotina</taxon>
        <taxon>Ellioviricetes</taxon>
        <taxon>Bunyavirales</taxon>
        <taxon>Arenaviridae</taxon>
        <taxon>Reptarenavirus</taxon>
        <taxon>Reptarenavirus aurei</taxon>
    </lineage>
</organism>
<evidence type="ECO:0000255" key="1"/>
<evidence type="ECO:0000255" key="2">
    <source>
        <dbReference type="PROSITE-ProRule" id="PRU00498"/>
    </source>
</evidence>
<evidence type="ECO:0000305" key="3"/>
<organismHost>
    <name type="scientific">Boa constrictor</name>
    <name type="common">Boa</name>
    <dbReference type="NCBI Taxonomy" id="8574"/>
</organismHost>